<protein>
    <recommendedName>
        <fullName evidence="2">Large ribosomal subunit protein uL6</fullName>
    </recommendedName>
    <alternativeName>
        <fullName evidence="3">50S ribosomal protein L6</fullName>
    </alternativeName>
</protein>
<sequence>MSRIGRLPITIPAGVDVTIDGDRVSVKGPKGPKGQLEHSLPTPITATLEEGQVTVARPDDERESRSLHGLTRTLISNMVEGVTNGFSKQLEVVGTGYRVQAKGQDLEFDLGYSHPVPVKVSQGITFTVEGNRVTVAGIDKQQQVGETAANIRKLRRPDPYKGKGVYAGEQIRRKAGKK</sequence>
<proteinExistence type="inferred from homology"/>
<comment type="function">
    <text evidence="2">This protein binds to the 23S rRNA, and is important in its secondary structure. It is located near the subunit interface in the base of the L7/L12 stalk, and near the tRNA binding site of the peptidyltransferase center.</text>
</comment>
<comment type="subunit">
    <text evidence="2">Part of the 50S ribosomal subunit.</text>
</comment>
<comment type="similarity">
    <text evidence="2">Belongs to the universal ribosomal protein uL6 family.</text>
</comment>
<name>RL6_MICLU</name>
<keyword id="KW-0687">Ribonucleoprotein</keyword>
<keyword id="KW-0689">Ribosomal protein</keyword>
<keyword id="KW-0694">RNA-binding</keyword>
<keyword id="KW-0699">rRNA-binding</keyword>
<accession>P33099</accession>
<organism>
    <name type="scientific">Micrococcus luteus</name>
    <name type="common">Micrococcus lysodeikticus</name>
    <dbReference type="NCBI Taxonomy" id="1270"/>
    <lineage>
        <taxon>Bacteria</taxon>
        <taxon>Bacillati</taxon>
        <taxon>Actinomycetota</taxon>
        <taxon>Actinomycetes</taxon>
        <taxon>Micrococcales</taxon>
        <taxon>Micrococcaceae</taxon>
        <taxon>Micrococcus</taxon>
    </lineage>
</organism>
<dbReference type="EMBL" id="X17524">
    <property type="protein sequence ID" value="CAA35562.1"/>
    <property type="molecule type" value="Genomic_DNA"/>
</dbReference>
<dbReference type="PIR" id="S29886">
    <property type="entry name" value="S29886"/>
</dbReference>
<dbReference type="SMR" id="P33099"/>
<dbReference type="STRING" id="1232675.GCA_000309825_02143"/>
<dbReference type="GO" id="GO:0022625">
    <property type="term" value="C:cytosolic large ribosomal subunit"/>
    <property type="evidence" value="ECO:0007669"/>
    <property type="project" value="TreeGrafter"/>
</dbReference>
<dbReference type="GO" id="GO:0019843">
    <property type="term" value="F:rRNA binding"/>
    <property type="evidence" value="ECO:0007669"/>
    <property type="project" value="UniProtKB-UniRule"/>
</dbReference>
<dbReference type="GO" id="GO:0003735">
    <property type="term" value="F:structural constituent of ribosome"/>
    <property type="evidence" value="ECO:0007669"/>
    <property type="project" value="InterPro"/>
</dbReference>
<dbReference type="GO" id="GO:0002181">
    <property type="term" value="P:cytoplasmic translation"/>
    <property type="evidence" value="ECO:0007669"/>
    <property type="project" value="TreeGrafter"/>
</dbReference>
<dbReference type="FunFam" id="3.90.930.12:FF:000002">
    <property type="entry name" value="50S ribosomal protein L6"/>
    <property type="match status" value="1"/>
</dbReference>
<dbReference type="Gene3D" id="3.90.930.12">
    <property type="entry name" value="Ribosomal protein L6, alpha-beta domain"/>
    <property type="match status" value="2"/>
</dbReference>
<dbReference type="HAMAP" id="MF_01365_B">
    <property type="entry name" value="Ribosomal_uL6_B"/>
    <property type="match status" value="1"/>
</dbReference>
<dbReference type="InterPro" id="IPR000702">
    <property type="entry name" value="Ribosomal_uL6-like"/>
</dbReference>
<dbReference type="InterPro" id="IPR036789">
    <property type="entry name" value="Ribosomal_uL6-like_a/b-dom_sf"/>
</dbReference>
<dbReference type="InterPro" id="IPR020040">
    <property type="entry name" value="Ribosomal_uL6_a/b-dom"/>
</dbReference>
<dbReference type="InterPro" id="IPR019906">
    <property type="entry name" value="Ribosomal_uL6_bac-type"/>
</dbReference>
<dbReference type="InterPro" id="IPR002358">
    <property type="entry name" value="Ribosomal_uL6_CS"/>
</dbReference>
<dbReference type="NCBIfam" id="TIGR03654">
    <property type="entry name" value="L6_bact"/>
    <property type="match status" value="1"/>
</dbReference>
<dbReference type="PANTHER" id="PTHR11655">
    <property type="entry name" value="60S/50S RIBOSOMAL PROTEIN L6/L9"/>
    <property type="match status" value="1"/>
</dbReference>
<dbReference type="PANTHER" id="PTHR11655:SF14">
    <property type="entry name" value="LARGE RIBOSOMAL SUBUNIT PROTEIN UL6M"/>
    <property type="match status" value="1"/>
</dbReference>
<dbReference type="Pfam" id="PF00347">
    <property type="entry name" value="Ribosomal_L6"/>
    <property type="match status" value="2"/>
</dbReference>
<dbReference type="PIRSF" id="PIRSF002162">
    <property type="entry name" value="Ribosomal_L6"/>
    <property type="match status" value="1"/>
</dbReference>
<dbReference type="PRINTS" id="PR00059">
    <property type="entry name" value="RIBOSOMALL6"/>
</dbReference>
<dbReference type="SUPFAM" id="SSF56053">
    <property type="entry name" value="Ribosomal protein L6"/>
    <property type="match status" value="2"/>
</dbReference>
<dbReference type="PROSITE" id="PS00525">
    <property type="entry name" value="RIBOSOMAL_L6_1"/>
    <property type="match status" value="1"/>
</dbReference>
<gene>
    <name evidence="2" type="primary">rplF</name>
</gene>
<feature type="initiator methionine" description="Removed" evidence="1">
    <location>
        <position position="1"/>
    </location>
</feature>
<feature type="chain" id="PRO_0000131056" description="Large ribosomal subunit protein uL6">
    <location>
        <begin position="2"/>
        <end position="178"/>
    </location>
</feature>
<evidence type="ECO:0000250" key="1"/>
<evidence type="ECO:0000255" key="2">
    <source>
        <dbReference type="HAMAP-Rule" id="MF_01365"/>
    </source>
</evidence>
<evidence type="ECO:0000305" key="3"/>
<reference key="1">
    <citation type="journal article" date="1989" name="J. Mol. Evol.">
        <title>Spectinomycin operon of Micrococcus luteus: evolutionary implications of organization and novel codon usage.</title>
        <authorList>
            <person name="Ohama T."/>
            <person name="Muto A."/>
            <person name="Osawa S."/>
        </authorList>
    </citation>
    <scope>NUCLEOTIDE SEQUENCE [GENOMIC DNA]</scope>
</reference>